<evidence type="ECO:0000250" key="1">
    <source>
        <dbReference type="UniProtKB" id="P9WQG9"/>
    </source>
</evidence>
<evidence type="ECO:0000255" key="2">
    <source>
        <dbReference type="PROSITE-ProRule" id="PRU00532"/>
    </source>
</evidence>
<evidence type="ECO:0000269" key="3">
    <source>
    </source>
</evidence>
<evidence type="ECO:0000305" key="4"/>
<evidence type="ECO:0007829" key="5">
    <source>
        <dbReference type="PDB" id="7JZS"/>
    </source>
</evidence>
<keyword id="KW-0002">3D-structure</keyword>
<keyword id="KW-0012">Acyltransferase</keyword>
<keyword id="KW-0046">Antibiotic resistance</keyword>
<keyword id="KW-0808">Transferase</keyword>
<name>AAC2_PROST</name>
<sequence>MGIEYRSLHTSQLTLSEKEALYDLLIEGFEGDFSHDDFAHTLGGMHVMAFDQQKLVGHVAIIQRHMALDNTPISVGYVEAMVVEQSYRRQGIGRQLMLQTNKIIASCYQLGLLSASDDGQKLYHSVGWQIWKGKLFELKQGSYIRSIEEEGGVMGWKADGEVDFTASLYCDFRGGDQW</sequence>
<organism>
    <name type="scientific">Providencia stuartii</name>
    <dbReference type="NCBI Taxonomy" id="588"/>
    <lineage>
        <taxon>Bacteria</taxon>
        <taxon>Pseudomonadati</taxon>
        <taxon>Pseudomonadota</taxon>
        <taxon>Gammaproteobacteria</taxon>
        <taxon>Enterobacterales</taxon>
        <taxon>Morganellaceae</taxon>
        <taxon>Providencia</taxon>
    </lineage>
</organism>
<protein>
    <recommendedName>
        <fullName>Aminoglycoside 2'-N-acetyltransferase</fullName>
        <ecNumber evidence="3">2.3.1.59</ecNumber>
    </recommendedName>
    <alternativeName>
        <fullName>AAC(2')-Ia</fullName>
    </alternativeName>
</protein>
<comment type="function">
    <text evidence="3">Catalyzes the coenzyme A-dependent acetylation of the 2' hydroxyl or amino group of a broad spectrum of aminoglycosides. It confers resistance to aminoglycosides.</text>
</comment>
<comment type="catalytic activity">
    <reaction evidence="3">
        <text>gentamicin C1a + acetyl-CoA = N(2')-acetylgentamicin C1a + CoA + H(+)</text>
        <dbReference type="Rhea" id="RHEA:24516"/>
        <dbReference type="ChEBI" id="CHEBI:15378"/>
        <dbReference type="ChEBI" id="CHEBI:57287"/>
        <dbReference type="ChEBI" id="CHEBI:57288"/>
        <dbReference type="ChEBI" id="CHEBI:58530"/>
        <dbReference type="ChEBI" id="CHEBI:58552"/>
        <dbReference type="EC" id="2.3.1.59"/>
    </reaction>
</comment>
<comment type="subunit">
    <text evidence="1">Homodimer.</text>
</comment>
<comment type="similarity">
    <text evidence="4">Belongs to the AAC(2')-I acetyltransferase family.</text>
</comment>
<accession>Q52424</accession>
<proteinExistence type="evidence at protein level"/>
<feature type="chain" id="PRO_0000064413" description="Aminoglycoside 2'-N-acetyltransferase">
    <location>
        <begin position="1"/>
        <end position="178"/>
    </location>
</feature>
<feature type="domain" description="N-acetyltransferase" evidence="2">
    <location>
        <begin position="8"/>
        <end position="171"/>
    </location>
</feature>
<feature type="binding site" evidence="1">
    <location>
        <position position="32"/>
    </location>
    <ligand>
        <name>substrate</name>
    </ligand>
</feature>
<feature type="binding site" evidence="1">
    <location>
        <begin position="79"/>
        <end position="80"/>
    </location>
    <ligand>
        <name>substrate</name>
    </ligand>
</feature>
<feature type="binding site" evidence="1">
    <location>
        <begin position="81"/>
        <end position="83"/>
    </location>
    <ligand>
        <name>CoA</name>
        <dbReference type="ChEBI" id="CHEBI:57287"/>
    </ligand>
</feature>
<feature type="binding site" evidence="1">
    <location>
        <begin position="88"/>
        <end position="93"/>
    </location>
    <ligand>
        <name>CoA</name>
        <dbReference type="ChEBI" id="CHEBI:57287"/>
    </ligand>
</feature>
<feature type="binding site" evidence="1">
    <location>
        <position position="114"/>
    </location>
    <ligand>
        <name>substrate</name>
    </ligand>
</feature>
<feature type="binding site" evidence="1">
    <location>
        <begin position="148"/>
        <end position="149"/>
    </location>
    <ligand>
        <name>substrate</name>
    </ligand>
</feature>
<feature type="strand" evidence="5">
    <location>
        <begin position="3"/>
        <end position="9"/>
    </location>
</feature>
<feature type="helix" evidence="5">
    <location>
        <begin position="10"/>
        <end position="12"/>
    </location>
</feature>
<feature type="helix" evidence="5">
    <location>
        <begin position="15"/>
        <end position="28"/>
    </location>
</feature>
<feature type="turn" evidence="5">
    <location>
        <begin position="29"/>
        <end position="31"/>
    </location>
</feature>
<feature type="helix" evidence="5">
    <location>
        <begin position="35"/>
        <end position="40"/>
    </location>
</feature>
<feature type="strand" evidence="5">
    <location>
        <begin position="43"/>
        <end position="51"/>
    </location>
</feature>
<feature type="strand" evidence="5">
    <location>
        <begin position="54"/>
        <end position="68"/>
    </location>
</feature>
<feature type="strand" evidence="5">
    <location>
        <begin position="71"/>
        <end position="83"/>
    </location>
</feature>
<feature type="helix" evidence="5">
    <location>
        <begin position="85"/>
        <end position="87"/>
    </location>
</feature>
<feature type="strand" evidence="5">
    <location>
        <begin position="89"/>
        <end position="91"/>
    </location>
</feature>
<feature type="helix" evidence="5">
    <location>
        <begin position="92"/>
        <end position="107"/>
    </location>
</feature>
<feature type="strand" evidence="5">
    <location>
        <begin position="109"/>
        <end position="114"/>
    </location>
</feature>
<feature type="turn" evidence="5">
    <location>
        <begin position="117"/>
        <end position="119"/>
    </location>
</feature>
<feature type="helix" evidence="5">
    <location>
        <begin position="120"/>
        <end position="124"/>
    </location>
</feature>
<feature type="turn" evidence="5">
    <location>
        <begin position="125"/>
        <end position="127"/>
    </location>
</feature>
<feature type="strand" evidence="5">
    <location>
        <begin position="135"/>
        <end position="139"/>
    </location>
</feature>
<feature type="strand" evidence="5">
    <location>
        <begin position="142"/>
        <end position="145"/>
    </location>
</feature>
<feature type="helix" evidence="5">
    <location>
        <begin position="147"/>
        <end position="149"/>
    </location>
</feature>
<feature type="turn" evidence="5">
    <location>
        <begin position="150"/>
        <end position="152"/>
    </location>
</feature>
<feature type="strand" evidence="5">
    <location>
        <begin position="153"/>
        <end position="160"/>
    </location>
</feature>
<gene>
    <name type="primary">aac</name>
</gene>
<reference key="1">
    <citation type="journal article" date="1993" name="J. Bacteriol.">
        <title>Characterization and transcriptional regulation of the 2'-N-acetyltransferase gene from Providencia stuartii.</title>
        <authorList>
            <person name="Rather P.N."/>
            <person name="Orosz E."/>
            <person name="Shaw K.J."/>
            <person name="Hare R."/>
            <person name="Miller G."/>
        </authorList>
    </citation>
    <scope>NUCLEOTIDE SEQUENCE [GENOMIC DNA]</scope>
    <scope>FUNCTION</scope>
    <scope>CATALYTIC ACTIVITY</scope>
    <source>
        <strain>SCH75082831A</strain>
    </source>
</reference>
<dbReference type="EC" id="2.3.1.59" evidence="3"/>
<dbReference type="EMBL" id="L06156">
    <property type="protein sequence ID" value="AAA03550.1"/>
    <property type="molecule type" value="Unassigned_RNA"/>
</dbReference>
<dbReference type="PIR" id="A49899">
    <property type="entry name" value="A49899"/>
</dbReference>
<dbReference type="PDB" id="5US1">
    <property type="method" value="X-ray"/>
    <property type="resolution" value="2.48 A"/>
    <property type="chains" value="A/B/C/D/E/F/G/H/I/J/K/L=1-178"/>
</dbReference>
<dbReference type="PDB" id="6VOU">
    <property type="method" value="X-ray"/>
    <property type="resolution" value="1.95 A"/>
    <property type="chains" value="A/B=1-178"/>
</dbReference>
<dbReference type="PDB" id="6VR2">
    <property type="method" value="X-ray"/>
    <property type="resolution" value="1.77 A"/>
    <property type="chains" value="A/B=1-178"/>
</dbReference>
<dbReference type="PDB" id="6VR3">
    <property type="method" value="X-ray"/>
    <property type="resolution" value="2.00 A"/>
    <property type="chains" value="A/B=1-178"/>
</dbReference>
<dbReference type="PDB" id="6VTA">
    <property type="method" value="X-ray"/>
    <property type="resolution" value="1.42 A"/>
    <property type="chains" value="A/B=1-178"/>
</dbReference>
<dbReference type="PDB" id="7JZS">
    <property type="method" value="X-ray"/>
    <property type="resolution" value="1.30 A"/>
    <property type="chains" value="A=2-178"/>
</dbReference>
<dbReference type="PDBsum" id="5US1"/>
<dbReference type="PDBsum" id="6VOU"/>
<dbReference type="PDBsum" id="6VR2"/>
<dbReference type="PDBsum" id="6VR3"/>
<dbReference type="PDBsum" id="6VTA"/>
<dbReference type="PDBsum" id="7JZS"/>
<dbReference type="SMR" id="Q52424"/>
<dbReference type="STRING" id="588.BGK56_19845"/>
<dbReference type="CARD" id="ARO:3002523">
    <property type="molecule name" value="AAC(2')-Ia"/>
    <property type="mechanism identifier" value="ARO:0001004"/>
    <property type="mechanism name" value="antibiotic inactivation"/>
</dbReference>
<dbReference type="KEGG" id="ag:AAA03550"/>
<dbReference type="OMA" id="VFDWRDG"/>
<dbReference type="GO" id="GO:0047921">
    <property type="term" value="F:aminoglycoside 2'-N-acetyltransferase activity"/>
    <property type="evidence" value="ECO:0007669"/>
    <property type="project" value="UniProtKB-EC"/>
</dbReference>
<dbReference type="GO" id="GO:0046677">
    <property type="term" value="P:response to antibiotic"/>
    <property type="evidence" value="ECO:0007669"/>
    <property type="project" value="UniProtKB-KW"/>
</dbReference>
<dbReference type="CDD" id="cd04301">
    <property type="entry name" value="NAT_SF"/>
    <property type="match status" value="1"/>
</dbReference>
<dbReference type="Gene3D" id="3.40.630.30">
    <property type="match status" value="1"/>
</dbReference>
<dbReference type="InterPro" id="IPR016181">
    <property type="entry name" value="Acyl_CoA_acyltransferase"/>
</dbReference>
<dbReference type="InterPro" id="IPR000182">
    <property type="entry name" value="GNAT_dom"/>
</dbReference>
<dbReference type="NCBIfam" id="NF000108">
    <property type="entry name" value="AAC_2p_Ia"/>
    <property type="match status" value="1"/>
</dbReference>
<dbReference type="Pfam" id="PF13527">
    <property type="entry name" value="Acetyltransf_9"/>
    <property type="match status" value="1"/>
</dbReference>
<dbReference type="SUPFAM" id="SSF55729">
    <property type="entry name" value="Acyl-CoA N-acyltransferases (Nat)"/>
    <property type="match status" value="1"/>
</dbReference>
<dbReference type="PROSITE" id="PS51186">
    <property type="entry name" value="GNAT"/>
    <property type="match status" value="1"/>
</dbReference>